<dbReference type="EMBL" id="AK009833">
    <property type="protein sequence ID" value="BAB26531.1"/>
    <property type="molecule type" value="mRNA"/>
</dbReference>
<dbReference type="EMBL" id="BC058616">
    <property type="protein sequence ID" value="AAH58616.1"/>
    <property type="molecule type" value="mRNA"/>
</dbReference>
<dbReference type="CCDS" id="CCDS15664.1"/>
<dbReference type="RefSeq" id="NP_083080.1">
    <property type="nucleotide sequence ID" value="NM_028804.1"/>
</dbReference>
<dbReference type="SMR" id="Q9D6Y1"/>
<dbReference type="FunCoup" id="Q9D6Y1">
    <property type="interactions" value="114"/>
</dbReference>
<dbReference type="STRING" id="10090.ENSMUSP00000027988"/>
<dbReference type="GlyCosmos" id="Q9D6Y1">
    <property type="glycosylation" value="1 site, No reported glycans"/>
</dbReference>
<dbReference type="GlyGen" id="Q9D6Y1">
    <property type="glycosylation" value="1 site"/>
</dbReference>
<dbReference type="iPTMnet" id="Q9D6Y1"/>
<dbReference type="PhosphoSitePlus" id="Q9D6Y1"/>
<dbReference type="PaxDb" id="10090-ENSMUSP00000027988"/>
<dbReference type="ProteomicsDB" id="265368"/>
<dbReference type="Antibodypedia" id="55471">
    <property type="antibodies" value="103 antibodies from 23 providers"/>
</dbReference>
<dbReference type="Ensembl" id="ENSMUST00000027988.8">
    <property type="protein sequence ID" value="ENSMUSP00000027988.8"/>
    <property type="gene ID" value="ENSMUSG00000026676.8"/>
</dbReference>
<dbReference type="GeneID" id="74186"/>
<dbReference type="KEGG" id="mmu:74186"/>
<dbReference type="UCSC" id="uc008ifo.1">
    <property type="organism name" value="mouse"/>
</dbReference>
<dbReference type="AGR" id="MGI:1921436"/>
<dbReference type="CTD" id="83643"/>
<dbReference type="MGI" id="MGI:1921436">
    <property type="gene designation" value="Ccdc3"/>
</dbReference>
<dbReference type="VEuPathDB" id="HostDB:ENSMUSG00000026676"/>
<dbReference type="eggNOG" id="ENOG502QPN3">
    <property type="taxonomic scope" value="Eukaryota"/>
</dbReference>
<dbReference type="GeneTree" id="ENSGT00390000014429"/>
<dbReference type="HOGENOM" id="CLU_085750_1_0_1"/>
<dbReference type="InParanoid" id="Q9D6Y1"/>
<dbReference type="OMA" id="WRPLSDG"/>
<dbReference type="OrthoDB" id="9924766at2759"/>
<dbReference type="PhylomeDB" id="Q9D6Y1"/>
<dbReference type="TreeFam" id="TF331410"/>
<dbReference type="BioGRID-ORCS" id="74186">
    <property type="hits" value="4 hits in 75 CRISPR screens"/>
</dbReference>
<dbReference type="PRO" id="PR:Q9D6Y1"/>
<dbReference type="Proteomes" id="UP000000589">
    <property type="component" value="Chromosome 2"/>
</dbReference>
<dbReference type="RNAct" id="Q9D6Y1">
    <property type="molecule type" value="protein"/>
</dbReference>
<dbReference type="Bgee" id="ENSMUSG00000026676">
    <property type="expression patterns" value="Expressed in tarsal region and 175 other cell types or tissues"/>
</dbReference>
<dbReference type="GO" id="GO:0005783">
    <property type="term" value="C:endoplasmic reticulum"/>
    <property type="evidence" value="ECO:0007669"/>
    <property type="project" value="Ensembl"/>
</dbReference>
<dbReference type="GO" id="GO:0005576">
    <property type="term" value="C:extracellular region"/>
    <property type="evidence" value="ECO:0000314"/>
    <property type="project" value="MGI"/>
</dbReference>
<dbReference type="GO" id="GO:0008610">
    <property type="term" value="P:lipid biosynthetic process"/>
    <property type="evidence" value="ECO:0000314"/>
    <property type="project" value="MGI"/>
</dbReference>
<dbReference type="GO" id="GO:0010629">
    <property type="term" value="P:negative regulation of gene expression"/>
    <property type="evidence" value="ECO:0000315"/>
    <property type="project" value="MGI"/>
</dbReference>
<dbReference type="GO" id="GO:0051055">
    <property type="term" value="P:negative regulation of lipid biosynthetic process"/>
    <property type="evidence" value="ECO:0000315"/>
    <property type="project" value="MGI"/>
</dbReference>
<dbReference type="GO" id="GO:0010804">
    <property type="term" value="P:negative regulation of tumor necrosis factor-mediated signaling pathway"/>
    <property type="evidence" value="ECO:0000250"/>
    <property type="project" value="UniProtKB"/>
</dbReference>
<dbReference type="GO" id="GO:0045600">
    <property type="term" value="P:positive regulation of fat cell differentiation"/>
    <property type="evidence" value="ECO:0000314"/>
    <property type="project" value="MGI"/>
</dbReference>
<dbReference type="GO" id="GO:0046889">
    <property type="term" value="P:positive regulation of lipid biosynthetic process"/>
    <property type="evidence" value="ECO:0000314"/>
    <property type="project" value="MGI"/>
</dbReference>
<dbReference type="GO" id="GO:0007165">
    <property type="term" value="P:signal transduction"/>
    <property type="evidence" value="ECO:0007669"/>
    <property type="project" value="Ensembl"/>
</dbReference>
<dbReference type="InterPro" id="IPR040311">
    <property type="entry name" value="CCDC3"/>
</dbReference>
<dbReference type="PANTHER" id="PTHR31663">
    <property type="entry name" value="COILED-COIL DOMAIN-CONTAINING PROTEIN 3"/>
    <property type="match status" value="1"/>
</dbReference>
<dbReference type="PANTHER" id="PTHR31663:SF4">
    <property type="entry name" value="COILED-COIL DOMAIN-CONTAINING PROTEIN 3"/>
    <property type="match status" value="1"/>
</dbReference>
<proteinExistence type="evidence at protein level"/>
<name>CCDC3_MOUSE</name>
<reference key="1">
    <citation type="journal article" date="2005" name="Science">
        <title>The transcriptional landscape of the mammalian genome.</title>
        <authorList>
            <person name="Carninci P."/>
            <person name="Kasukawa T."/>
            <person name="Katayama S."/>
            <person name="Gough J."/>
            <person name="Frith M.C."/>
            <person name="Maeda N."/>
            <person name="Oyama R."/>
            <person name="Ravasi T."/>
            <person name="Lenhard B."/>
            <person name="Wells C."/>
            <person name="Kodzius R."/>
            <person name="Shimokawa K."/>
            <person name="Bajic V.B."/>
            <person name="Brenner S.E."/>
            <person name="Batalov S."/>
            <person name="Forrest A.R."/>
            <person name="Zavolan M."/>
            <person name="Davis M.J."/>
            <person name="Wilming L.G."/>
            <person name="Aidinis V."/>
            <person name="Allen J.E."/>
            <person name="Ambesi-Impiombato A."/>
            <person name="Apweiler R."/>
            <person name="Aturaliya R.N."/>
            <person name="Bailey T.L."/>
            <person name="Bansal M."/>
            <person name="Baxter L."/>
            <person name="Beisel K.W."/>
            <person name="Bersano T."/>
            <person name="Bono H."/>
            <person name="Chalk A.M."/>
            <person name="Chiu K.P."/>
            <person name="Choudhary V."/>
            <person name="Christoffels A."/>
            <person name="Clutterbuck D.R."/>
            <person name="Crowe M.L."/>
            <person name="Dalla E."/>
            <person name="Dalrymple B.P."/>
            <person name="de Bono B."/>
            <person name="Della Gatta G."/>
            <person name="di Bernardo D."/>
            <person name="Down T."/>
            <person name="Engstrom P."/>
            <person name="Fagiolini M."/>
            <person name="Faulkner G."/>
            <person name="Fletcher C.F."/>
            <person name="Fukushima T."/>
            <person name="Furuno M."/>
            <person name="Futaki S."/>
            <person name="Gariboldi M."/>
            <person name="Georgii-Hemming P."/>
            <person name="Gingeras T.R."/>
            <person name="Gojobori T."/>
            <person name="Green R.E."/>
            <person name="Gustincich S."/>
            <person name="Harbers M."/>
            <person name="Hayashi Y."/>
            <person name="Hensch T.K."/>
            <person name="Hirokawa N."/>
            <person name="Hill D."/>
            <person name="Huminiecki L."/>
            <person name="Iacono M."/>
            <person name="Ikeo K."/>
            <person name="Iwama A."/>
            <person name="Ishikawa T."/>
            <person name="Jakt M."/>
            <person name="Kanapin A."/>
            <person name="Katoh M."/>
            <person name="Kawasawa Y."/>
            <person name="Kelso J."/>
            <person name="Kitamura H."/>
            <person name="Kitano H."/>
            <person name="Kollias G."/>
            <person name="Krishnan S.P."/>
            <person name="Kruger A."/>
            <person name="Kummerfeld S.K."/>
            <person name="Kurochkin I.V."/>
            <person name="Lareau L.F."/>
            <person name="Lazarevic D."/>
            <person name="Lipovich L."/>
            <person name="Liu J."/>
            <person name="Liuni S."/>
            <person name="McWilliam S."/>
            <person name="Madan Babu M."/>
            <person name="Madera M."/>
            <person name="Marchionni L."/>
            <person name="Matsuda H."/>
            <person name="Matsuzawa S."/>
            <person name="Miki H."/>
            <person name="Mignone F."/>
            <person name="Miyake S."/>
            <person name="Morris K."/>
            <person name="Mottagui-Tabar S."/>
            <person name="Mulder N."/>
            <person name="Nakano N."/>
            <person name="Nakauchi H."/>
            <person name="Ng P."/>
            <person name="Nilsson R."/>
            <person name="Nishiguchi S."/>
            <person name="Nishikawa S."/>
            <person name="Nori F."/>
            <person name="Ohara O."/>
            <person name="Okazaki Y."/>
            <person name="Orlando V."/>
            <person name="Pang K.C."/>
            <person name="Pavan W.J."/>
            <person name="Pavesi G."/>
            <person name="Pesole G."/>
            <person name="Petrovsky N."/>
            <person name="Piazza S."/>
            <person name="Reed J."/>
            <person name="Reid J.F."/>
            <person name="Ring B.Z."/>
            <person name="Ringwald M."/>
            <person name="Rost B."/>
            <person name="Ruan Y."/>
            <person name="Salzberg S.L."/>
            <person name="Sandelin A."/>
            <person name="Schneider C."/>
            <person name="Schoenbach C."/>
            <person name="Sekiguchi K."/>
            <person name="Semple C.A."/>
            <person name="Seno S."/>
            <person name="Sessa L."/>
            <person name="Sheng Y."/>
            <person name="Shibata Y."/>
            <person name="Shimada H."/>
            <person name="Shimada K."/>
            <person name="Silva D."/>
            <person name="Sinclair B."/>
            <person name="Sperling S."/>
            <person name="Stupka E."/>
            <person name="Sugiura K."/>
            <person name="Sultana R."/>
            <person name="Takenaka Y."/>
            <person name="Taki K."/>
            <person name="Tammoja K."/>
            <person name="Tan S.L."/>
            <person name="Tang S."/>
            <person name="Taylor M.S."/>
            <person name="Tegner J."/>
            <person name="Teichmann S.A."/>
            <person name="Ueda H.R."/>
            <person name="van Nimwegen E."/>
            <person name="Verardo R."/>
            <person name="Wei C.L."/>
            <person name="Yagi K."/>
            <person name="Yamanishi H."/>
            <person name="Zabarovsky E."/>
            <person name="Zhu S."/>
            <person name="Zimmer A."/>
            <person name="Hide W."/>
            <person name="Bult C."/>
            <person name="Grimmond S.M."/>
            <person name="Teasdale R.D."/>
            <person name="Liu E.T."/>
            <person name="Brusic V."/>
            <person name="Quackenbush J."/>
            <person name="Wahlestedt C."/>
            <person name="Mattick J.S."/>
            <person name="Hume D.A."/>
            <person name="Kai C."/>
            <person name="Sasaki D."/>
            <person name="Tomaru Y."/>
            <person name="Fukuda S."/>
            <person name="Kanamori-Katayama M."/>
            <person name="Suzuki M."/>
            <person name="Aoki J."/>
            <person name="Arakawa T."/>
            <person name="Iida J."/>
            <person name="Imamura K."/>
            <person name="Itoh M."/>
            <person name="Kato T."/>
            <person name="Kawaji H."/>
            <person name="Kawagashira N."/>
            <person name="Kawashima T."/>
            <person name="Kojima M."/>
            <person name="Kondo S."/>
            <person name="Konno H."/>
            <person name="Nakano K."/>
            <person name="Ninomiya N."/>
            <person name="Nishio T."/>
            <person name="Okada M."/>
            <person name="Plessy C."/>
            <person name="Shibata K."/>
            <person name="Shiraki T."/>
            <person name="Suzuki S."/>
            <person name="Tagami M."/>
            <person name="Waki K."/>
            <person name="Watahiki A."/>
            <person name="Okamura-Oho Y."/>
            <person name="Suzuki H."/>
            <person name="Kawai J."/>
            <person name="Hayashizaki Y."/>
        </authorList>
    </citation>
    <scope>NUCLEOTIDE SEQUENCE [LARGE SCALE MRNA]</scope>
    <source>
        <strain>C57BL/6J</strain>
        <tissue>Tongue</tissue>
    </source>
</reference>
<reference key="2">
    <citation type="journal article" date="2004" name="Genome Res.">
        <title>The status, quality, and expansion of the NIH full-length cDNA project: the Mammalian Gene Collection (MGC).</title>
        <authorList>
            <consortium name="The MGC Project Team"/>
        </authorList>
    </citation>
    <scope>NUCLEOTIDE SEQUENCE [LARGE SCALE MRNA]</scope>
    <source>
        <strain>C57BL/6J</strain>
        <tissue>Brain</tissue>
    </source>
</reference>
<reference key="3">
    <citation type="journal article" date="2010" name="Biochem. Biophys. Res. Commun.">
        <title>Identification of a new secretory factor, CCDC3/Favine, in adipocytes and endothelial cells.</title>
        <authorList>
            <person name="Kobayashi S."/>
            <person name="Fukuhara A."/>
            <person name="Taguchi T."/>
            <person name="Matsuda M."/>
            <person name="Tochino Y."/>
            <person name="Otsuki M."/>
            <person name="Shimomura I."/>
        </authorList>
    </citation>
    <scope>PROTEIN SEQUENCE OF N-TERMINUS</scope>
    <scope>TISSUE SPECIFICITY</scope>
    <scope>SUBCELLULAR LOCATION</scope>
    <scope>SUBUNIT</scope>
    <scope>GLYCOSYLATION</scope>
</reference>
<reference key="4">
    <citation type="journal article" date="2015" name="J. Biol. Chem.">
        <title>Fat/vessel-derived secretory protein (Favine)/CCDC3 is involved in lipid accumulation.</title>
        <authorList>
            <person name="Kobayashi S."/>
            <person name="Fukuhara A."/>
            <person name="Otsuki M."/>
            <person name="Suganami T."/>
            <person name="Ogawa Y."/>
            <person name="Morii E."/>
            <person name="Shimomura I."/>
        </authorList>
    </citation>
    <scope>FUNCTION</scope>
    <scope>DISRUPTION PHENOTYPE</scope>
</reference>
<protein>
    <recommendedName>
        <fullName>Coiled-coil domain-containing protein 3</fullName>
    </recommendedName>
    <alternativeName>
        <fullName>Fat/vessel-derived secretory protein</fullName>
        <shortName evidence="5">Favine</shortName>
    </alternativeName>
</protein>
<feature type="signal peptide" evidence="3">
    <location>
        <begin position="1"/>
        <end position="21"/>
    </location>
</feature>
<feature type="chain" id="PRO_0000020863" description="Coiled-coil domain-containing protein 3">
    <location>
        <begin position="22"/>
        <end position="273"/>
    </location>
</feature>
<feature type="coiled-coil region" evidence="2">
    <location>
        <begin position="188"/>
        <end position="250"/>
    </location>
</feature>
<feature type="glycosylation site" description="N-linked (GlcNAc...) asparagine" evidence="6">
    <location>
        <position position="100"/>
    </location>
</feature>
<organism>
    <name type="scientific">Mus musculus</name>
    <name type="common">Mouse</name>
    <dbReference type="NCBI Taxonomy" id="10090"/>
    <lineage>
        <taxon>Eukaryota</taxon>
        <taxon>Metazoa</taxon>
        <taxon>Chordata</taxon>
        <taxon>Craniata</taxon>
        <taxon>Vertebrata</taxon>
        <taxon>Euteleostomi</taxon>
        <taxon>Mammalia</taxon>
        <taxon>Eutheria</taxon>
        <taxon>Euarchontoglires</taxon>
        <taxon>Glires</taxon>
        <taxon>Rodentia</taxon>
        <taxon>Myomorpha</taxon>
        <taxon>Muroidea</taxon>
        <taxon>Muridae</taxon>
        <taxon>Murinae</taxon>
        <taxon>Mus</taxon>
        <taxon>Mus</taxon>
    </lineage>
</organism>
<accession>Q9D6Y1</accession>
<keyword id="KW-0175">Coiled coil</keyword>
<keyword id="KW-0903">Direct protein sequencing</keyword>
<keyword id="KW-0325">Glycoprotein</keyword>
<keyword id="KW-1185">Reference proteome</keyword>
<keyword id="KW-0964">Secreted</keyword>
<keyword id="KW-0732">Signal</keyword>
<evidence type="ECO:0000250" key="1">
    <source>
        <dbReference type="UniProtKB" id="Q9BQI4"/>
    </source>
</evidence>
<evidence type="ECO:0000255" key="2"/>
<evidence type="ECO:0000269" key="3">
    <source>
    </source>
</evidence>
<evidence type="ECO:0000269" key="4">
    <source>
    </source>
</evidence>
<evidence type="ECO:0000303" key="5">
    <source>
    </source>
</evidence>
<evidence type="ECO:0000305" key="6">
    <source>
    </source>
</evidence>
<gene>
    <name type="primary">Ccdc3</name>
</gene>
<comment type="function">
    <text evidence="1 4">Negatively regulates TNF-alpha-induced pro-inflammatory response in endothelial cells (ECs) via inhibition of TNF-alpha-induced NF-kappaB activation in ECs (By similarity). Positively regulates lipid accumulation in adipose cells (PubMed:25605713).</text>
</comment>
<comment type="subunit">
    <text evidence="3">Homodimer.</text>
</comment>
<comment type="subcellular location">
    <subcellularLocation>
        <location evidence="3">Secreted</location>
    </subcellularLocation>
</comment>
<comment type="tissue specificity">
    <text evidence="3">Expressed in aorta and adipose tissue. Enriched in mature adipocytes. Over-expressed in adipose tissue from either hormonally-induced or nutritionally-regulated obese mice models.</text>
</comment>
<comment type="PTM">
    <text evidence="3">N-glycosylated.</text>
</comment>
<comment type="disruption phenotype">
    <text evidence="4">Mice exhibit a lean phenotype with reduced fat mass and smaller adipocyte size compared to wild type mice. Adipose tissue exhibit decreased levels of lipogenic genes, such as fatty-acid synthase (FASN), acetyl-CoA carboxylase (ACACA) and diacylglycerol O-acyltransferase-2 (DGAT2). Mice exhibit strongly inhibited age-related hepatic steatosis and decreased number of inflammatory cells in epididymal adipose tissue.</text>
</comment>
<sequence>MPLPLLLAALCLAASPAPARACQLPSEWRPLSEGCRAELAETIVYAKVLALHPEVPGLYNYLPWQYQAGEGGLFYSAEVEMLCDQAWGSMLEVPAGSRLNLTGLGYFSCHSHTVVQDYSYFFFVRMDENYNLLPHGVNFQDAIFPDTQENRRMFSSLFQFANCSQGQQLTTFSSDWEVQEDNRLMCSSVQKALFEEEDHVKKLQQKVATLEKRNRQLRERVKKVKRSLRQARKNSRHLELVNQKLNEKLGASSAQQHINALGREPVRAPYLHG</sequence>